<comment type="function">
    <text evidence="6">Probable receptor, which may be involved in the internalization of lipophilic molecules and/or signal transduction. May act as a tumor suppressor.</text>
</comment>
<comment type="subunit">
    <text>May interact with RACK1, ZFYVE9 and NMRK2.</text>
</comment>
<comment type="interaction">
    <interactant intactId="EBI-296693">
        <id>Q9Y561</id>
    </interactant>
    <interactant intactId="EBI-514059">
        <id>Q9NPI5</id>
        <label>NMRK2</label>
    </interactant>
    <organismsDiffer>false</organismsDiffer>
    <experiments>2</experiments>
</comment>
<comment type="interaction">
    <interactant intactId="EBI-296693">
        <id>Q9Y561</id>
    </interactant>
    <interactant intactId="EBI-296739">
        <id>P63244</id>
        <label>RACK1</label>
    </interactant>
    <organismsDiffer>false</organismsDiffer>
    <experiments>2</experiments>
</comment>
<comment type="interaction">
    <interactant intactId="EBI-296693">
        <id>Q9Y561</id>
    </interactant>
    <interactant intactId="EBI-296817">
        <id>O95405</id>
        <label>ZFYVE9</label>
    </interactant>
    <organismsDiffer>false</organismsDiffer>
    <experiments>2</experiments>
</comment>
<comment type="subcellular location">
    <subcellularLocation>
        <location evidence="6">Membrane</location>
        <topology evidence="6">Single-pass type I membrane protein</topology>
    </subcellularLocation>
    <subcellularLocation>
        <location evidence="6">Membrane</location>
        <location evidence="6">Coated pit</location>
    </subcellularLocation>
</comment>
<comment type="alternative products">
    <event type="alternative splicing"/>
    <isoform>
        <id>Q9Y561-1</id>
        <name>1</name>
        <sequence type="displayed"/>
    </isoform>
    <isoform>
        <id>Q9Y561-2</id>
        <name>2</name>
        <sequence type="described" ref="VSP_040992"/>
    </isoform>
</comment>
<comment type="tissue specificity">
    <text evidence="9">Widely expressed in heart, skeletal muscle, brain, lung, placenta and pancreas, but not in tissues consisting of a large number of epithelial cells, such as liver and kidney. Expressed at very low levels in a number of tumor-derived cell lines.</text>
</comment>
<comment type="disease" evidence="7">
    <disease id="DI-05685">
        <name>Oculopharyngodistal myopathy 1</name>
        <acronym>OPDM1</acronym>
        <description>A form of oculopharyngodistal myopathy, a muscle disorder characterized by progressive ptosis, external ophthalmoplegia, and weakness of the masseter, facial, pharyngeal, and distal limb muscles. The myopathological features are presence of rimmed vacuoles in the muscle fibers and myopathic changes of differing severity. OPDM1 inheritance pattern is autosomal dominant.</description>
        <dbReference type="MIM" id="164310"/>
    </disease>
    <text evidence="7 8">The disease is caused by variants affecting the gene represented in this entry. The causative mutation is a heterozygous trinucleotide repeat expansion (CGG) in the 5-prime untranslated region of the gene (PubMed:31332380, PubMed:37339631). The number of repeats in OPDM1 patients is usually greater than 100 (PubMed:37339631).</text>
</comment>
<comment type="disease" evidence="8">
    <disease id="DI-06733">
        <name>Amyotrophic lateral sclerosis 28</name>
        <acronym>ALS28</acronym>
        <description>A form of amyotrophic lateral sclerosis, a neurodegenerative disorder affecting upper motor neurons in the brain and lower motor neurons in the brain stem and spinal cord, resulting in fatal paralysis. Sensory abnormalities are absent. The pathologic hallmarks of the disease include pallor of the corticospinal tract due to loss of motor neurons, presence of ubiquitin-positive inclusions within surviving motor neurons, and deposition of pathologic aggregates. The etiology of amyotrophic lateral sclerosis is likely to be multifactorial, involving both genetic and environmental factors. The disease is inherited in 5-10% of the cases. ALS28 is an autosomal dominant form characterized by adult onset of slowly progressive limb muscle weakness and atrophy resulting in gait difficulties, loss of ambulation, and distal upper limb weakness. Facial involvement is rare, but some patients may have respiratory insufficiency.</description>
        <dbReference type="MIM" id="620452"/>
    </disease>
    <text evidence="8">The disease is caused by variants affecting the gene represented in this entry. The causative mutation is a heterozygous trinucleotide repeat expansion (CGG) in the 5-prime untranslated region of the gene. The number of repeats in ALS28 patients is between 61 and 100.</text>
</comment>
<comment type="similarity">
    <text evidence="11">Belongs to the LDLR family.</text>
</comment>
<feature type="signal peptide" evidence="2">
    <location>
        <begin position="1"/>
        <end position="32"/>
    </location>
</feature>
<feature type="chain" id="PRO_0000017339" description="Low-density lipoprotein receptor-related protein 12">
    <location>
        <begin position="33"/>
        <end position="859"/>
    </location>
</feature>
<feature type="topological domain" description="Extracellular" evidence="2">
    <location>
        <begin position="33"/>
        <end position="492"/>
    </location>
</feature>
<feature type="transmembrane region" description="Helical" evidence="2">
    <location>
        <begin position="493"/>
        <end position="513"/>
    </location>
</feature>
<feature type="topological domain" description="Cytoplasmic" evidence="2">
    <location>
        <begin position="514"/>
        <end position="859"/>
    </location>
</feature>
<feature type="domain" description="CUB 1" evidence="3">
    <location>
        <begin position="47"/>
        <end position="159"/>
    </location>
</feature>
<feature type="domain" description="LDL-receptor class A 1" evidence="4">
    <location>
        <begin position="165"/>
        <end position="201"/>
    </location>
</feature>
<feature type="domain" description="LDL-receptor class A 2" evidence="4">
    <location>
        <begin position="214"/>
        <end position="255"/>
    </location>
</feature>
<feature type="domain" description="CUB 2" evidence="3">
    <location>
        <begin position="259"/>
        <end position="372"/>
    </location>
</feature>
<feature type="domain" description="LDL-receptor class A 3" evidence="4">
    <location>
        <begin position="374"/>
        <end position="411"/>
    </location>
</feature>
<feature type="domain" description="LDL-receptor class A 4" evidence="4">
    <location>
        <begin position="412"/>
        <end position="449"/>
    </location>
</feature>
<feature type="domain" description="LDL-receptor class A 5" evidence="4">
    <location>
        <begin position="450"/>
        <end position="486"/>
    </location>
</feature>
<feature type="region of interest" description="Disordered" evidence="5">
    <location>
        <begin position="623"/>
        <end position="678"/>
    </location>
</feature>
<feature type="region of interest" description="Disordered" evidence="5">
    <location>
        <begin position="693"/>
        <end position="723"/>
    </location>
</feature>
<feature type="region of interest" description="Disordered" evidence="5">
    <location>
        <begin position="748"/>
        <end position="770"/>
    </location>
</feature>
<feature type="region of interest" description="Disordered" evidence="5">
    <location>
        <begin position="801"/>
        <end position="823"/>
    </location>
</feature>
<feature type="compositionally biased region" description="Polar residues" evidence="5">
    <location>
        <begin position="748"/>
        <end position="757"/>
    </location>
</feature>
<feature type="compositionally biased region" description="Polar residues" evidence="5">
    <location>
        <begin position="801"/>
        <end position="814"/>
    </location>
</feature>
<feature type="glycosylation site" description="N-linked (GlcNAc...) asparagine" evidence="2">
    <location>
        <position position="75"/>
    </location>
</feature>
<feature type="glycosylation site" description="N-linked (GlcNAc...) asparagine" evidence="2">
    <location>
        <position position="146"/>
    </location>
</feature>
<feature type="glycosylation site" description="N-linked (GlcNAc...) asparagine" evidence="2">
    <location>
        <position position="284"/>
    </location>
</feature>
<feature type="glycosylation site" description="N-linked (GlcNAc...) asparagine" evidence="2">
    <location>
        <position position="366"/>
    </location>
</feature>
<feature type="glycosylation site" description="N-linked (GlcNAc...) asparagine" evidence="2">
    <location>
        <position position="409"/>
    </location>
</feature>
<feature type="glycosylation site" description="N-linked (GlcNAc...) asparagine" evidence="2">
    <location>
        <position position="441"/>
    </location>
</feature>
<feature type="disulfide bond" evidence="1">
    <location>
        <begin position="47"/>
        <end position="76"/>
    </location>
</feature>
<feature type="disulfide bond" evidence="1">
    <location>
        <begin position="103"/>
        <end position="122"/>
    </location>
</feature>
<feature type="disulfide bond" evidence="1">
    <location>
        <begin position="166"/>
        <end position="178"/>
    </location>
</feature>
<feature type="disulfide bond" evidence="1">
    <location>
        <begin position="173"/>
        <end position="191"/>
    </location>
</feature>
<feature type="disulfide bond" evidence="1">
    <location>
        <begin position="185"/>
        <end position="200"/>
    </location>
</feature>
<feature type="disulfide bond" evidence="1">
    <location>
        <begin position="215"/>
        <end position="232"/>
    </location>
</feature>
<feature type="disulfide bond" evidence="1">
    <location>
        <begin position="222"/>
        <end position="245"/>
    </location>
</feature>
<feature type="disulfide bond" evidence="1">
    <location>
        <begin position="239"/>
        <end position="254"/>
    </location>
</feature>
<feature type="disulfide bond" evidence="1">
    <location>
        <begin position="259"/>
        <end position="285"/>
    </location>
</feature>
<feature type="disulfide bond" evidence="1">
    <location>
        <begin position="375"/>
        <end position="388"/>
    </location>
</feature>
<feature type="disulfide bond" evidence="1">
    <location>
        <begin position="382"/>
        <end position="401"/>
    </location>
</feature>
<feature type="disulfide bond" evidence="1">
    <location>
        <begin position="395"/>
        <end position="410"/>
    </location>
</feature>
<feature type="disulfide bond" evidence="1">
    <location>
        <begin position="413"/>
        <end position="426"/>
    </location>
</feature>
<feature type="disulfide bond" evidence="1">
    <location>
        <begin position="420"/>
        <end position="439"/>
    </location>
</feature>
<feature type="disulfide bond" evidence="1">
    <location>
        <begin position="433"/>
        <end position="448"/>
    </location>
</feature>
<feature type="disulfide bond" evidence="1">
    <location>
        <begin position="451"/>
        <end position="463"/>
    </location>
</feature>
<feature type="disulfide bond" evidence="1">
    <location>
        <begin position="458"/>
        <end position="476"/>
    </location>
</feature>
<feature type="disulfide bond" evidence="1">
    <location>
        <begin position="470"/>
        <end position="485"/>
    </location>
</feature>
<feature type="splice variant" id="VSP_040992" description="In isoform 2." evidence="10">
    <location>
        <begin position="27"/>
        <end position="45"/>
    </location>
</feature>
<feature type="sequence variant" id="VAR_049766" description="In dbSNP:rs16871494.">
    <original>S</original>
    <variation>G</variation>
    <location>
        <position position="694"/>
    </location>
</feature>
<organism evidence="12">
    <name type="scientific">Homo sapiens</name>
    <name type="common">Human</name>
    <dbReference type="NCBI Taxonomy" id="9606"/>
    <lineage>
        <taxon>Eukaryota</taxon>
        <taxon>Metazoa</taxon>
        <taxon>Chordata</taxon>
        <taxon>Craniata</taxon>
        <taxon>Vertebrata</taxon>
        <taxon>Euteleostomi</taxon>
        <taxon>Mammalia</taxon>
        <taxon>Eutheria</taxon>
        <taxon>Euarchontoglires</taxon>
        <taxon>Primates</taxon>
        <taxon>Haplorrhini</taxon>
        <taxon>Catarrhini</taxon>
        <taxon>Hominidae</taxon>
        <taxon>Homo</taxon>
    </lineage>
</organism>
<proteinExistence type="evidence at protein level"/>
<keyword id="KW-0025">Alternative splicing</keyword>
<keyword id="KW-0036">Amyotrophic lateral sclerosis</keyword>
<keyword id="KW-0168">Coated pit</keyword>
<keyword id="KW-1015">Disulfide bond</keyword>
<keyword id="KW-0254">Endocytosis</keyword>
<keyword id="KW-0325">Glycoprotein</keyword>
<keyword id="KW-0472">Membrane</keyword>
<keyword id="KW-0523">Neurodegeneration</keyword>
<keyword id="KW-1267">Proteomics identification</keyword>
<keyword id="KW-0675">Receptor</keyword>
<keyword id="KW-1185">Reference proteome</keyword>
<keyword id="KW-0677">Repeat</keyword>
<keyword id="KW-0732">Signal</keyword>
<keyword id="KW-0812">Transmembrane</keyword>
<keyword id="KW-1133">Transmembrane helix</keyword>
<sequence>MACRWSTKESPRWRSALLLLFLAGVYGNGALAEHSENVHISGVSTACGETPEQIRAPSGIITSPGWPSEYPAKINCSWFIRANPGEIITISFQDFDIQGSRRCNLDWLTIETYKNIESYRACGSTIPPPYISSQDHIWIRFHSDDNISRKGFRLAYFSGKSEEPNCACDQFRCGNGKCIPEAWKCNNMDECGDSSDEEICAKEANPPTAAAFQPCAYNQFQCLSRFTKVYTCLPESLKCDGNIDCLDLGDEIDCDVPTCGQWLKYFYGTFNSPNYPDFYPPGSNCTWLIDTGDHRKVILRFTDFKLDGTGYGDYVKIYDGLEENPHKLLRVLTAFDSHAPLTVVSSSGQIRVHFCADKVNAARGFNATYQVDGFCLPWEIPCGGNWGCYTEQQRCDGYWHCPNGRDETNCTMCQKEEFPCSRNGVCYPRSDRCNYQNHCPNGSDEKNCFFCQPGNFHCKNNRCVFESWVCDSQDDCGDGSDEENCPVIVPTRVITAAVIGSLICGLLLVIALGCTCKLYSLRMFERRSFETQLSRVEAELLRREAPPSYGQLIAQGLIPPVEDFPVCSPNQASVLENLRLAVRSQLGFTSVRLPMAGRSSNIWNRIFNFARSRHSGSLALVSADGDEVVPSQSTSREPERNHTHRSLFSVESDDTDTENERRDMAGASGGVAAPLPQKVPPTTAVEATVGACASSSTQSTRGGHADNGRDVTSVEPPSVSPARHQLTSALSRMTQGLRWVRFTLGRSSSLSQNQSPLRQLDNGVSGREDDDDVEMLIPISDGSSDFDVNDCSRPLLDLASDQGQGLRQPYNATNPGVRPSNRDGPCERCGIVHTAQIPDTCLEVTLKNETSDDEALLLC</sequence>
<reference evidence="11" key="1">
    <citation type="journal article" date="1999" name="Oncogene">
        <title>Cloning and characterization of a novel gene encoding a putative transmembrane protein with altered expression in some human transformed and tumor-derived cell lines.</title>
        <authorList>
            <person name="Qing J."/>
            <person name="Wei D."/>
            <person name="Maher V.M."/>
            <person name="McCormick J.J."/>
        </authorList>
    </citation>
    <scope>NUCLEOTIDE SEQUENCE [MRNA] (ISOFORM 1)</scope>
    <scope>TISSUE SPECIFICITY</scope>
</reference>
<reference key="2">
    <citation type="journal article" date="2004" name="Nat. Genet.">
        <title>Complete sequencing and characterization of 21,243 full-length human cDNAs.</title>
        <authorList>
            <person name="Ota T."/>
            <person name="Suzuki Y."/>
            <person name="Nishikawa T."/>
            <person name="Otsuki T."/>
            <person name="Sugiyama T."/>
            <person name="Irie R."/>
            <person name="Wakamatsu A."/>
            <person name="Hayashi K."/>
            <person name="Sato H."/>
            <person name="Nagai K."/>
            <person name="Kimura K."/>
            <person name="Makita H."/>
            <person name="Sekine M."/>
            <person name="Obayashi M."/>
            <person name="Nishi T."/>
            <person name="Shibahara T."/>
            <person name="Tanaka T."/>
            <person name="Ishii S."/>
            <person name="Yamamoto J."/>
            <person name="Saito K."/>
            <person name="Kawai Y."/>
            <person name="Isono Y."/>
            <person name="Nakamura Y."/>
            <person name="Nagahari K."/>
            <person name="Murakami K."/>
            <person name="Yasuda T."/>
            <person name="Iwayanagi T."/>
            <person name="Wagatsuma M."/>
            <person name="Shiratori A."/>
            <person name="Sudo H."/>
            <person name="Hosoiri T."/>
            <person name="Kaku Y."/>
            <person name="Kodaira H."/>
            <person name="Kondo H."/>
            <person name="Sugawara M."/>
            <person name="Takahashi M."/>
            <person name="Kanda K."/>
            <person name="Yokoi T."/>
            <person name="Furuya T."/>
            <person name="Kikkawa E."/>
            <person name="Omura Y."/>
            <person name="Abe K."/>
            <person name="Kamihara K."/>
            <person name="Katsuta N."/>
            <person name="Sato K."/>
            <person name="Tanikawa M."/>
            <person name="Yamazaki M."/>
            <person name="Ninomiya K."/>
            <person name="Ishibashi T."/>
            <person name="Yamashita H."/>
            <person name="Murakawa K."/>
            <person name="Fujimori K."/>
            <person name="Tanai H."/>
            <person name="Kimata M."/>
            <person name="Watanabe M."/>
            <person name="Hiraoka S."/>
            <person name="Chiba Y."/>
            <person name="Ishida S."/>
            <person name="Ono Y."/>
            <person name="Takiguchi S."/>
            <person name="Watanabe S."/>
            <person name="Yosida M."/>
            <person name="Hotuta T."/>
            <person name="Kusano J."/>
            <person name="Kanehori K."/>
            <person name="Takahashi-Fujii A."/>
            <person name="Hara H."/>
            <person name="Tanase T.-O."/>
            <person name="Nomura Y."/>
            <person name="Togiya S."/>
            <person name="Komai F."/>
            <person name="Hara R."/>
            <person name="Takeuchi K."/>
            <person name="Arita M."/>
            <person name="Imose N."/>
            <person name="Musashino K."/>
            <person name="Yuuki H."/>
            <person name="Oshima A."/>
            <person name="Sasaki N."/>
            <person name="Aotsuka S."/>
            <person name="Yoshikawa Y."/>
            <person name="Matsunawa H."/>
            <person name="Ichihara T."/>
            <person name="Shiohata N."/>
            <person name="Sano S."/>
            <person name="Moriya S."/>
            <person name="Momiyama H."/>
            <person name="Satoh N."/>
            <person name="Takami S."/>
            <person name="Terashima Y."/>
            <person name="Suzuki O."/>
            <person name="Nakagawa S."/>
            <person name="Senoh A."/>
            <person name="Mizoguchi H."/>
            <person name="Goto Y."/>
            <person name="Shimizu F."/>
            <person name="Wakebe H."/>
            <person name="Hishigaki H."/>
            <person name="Watanabe T."/>
            <person name="Sugiyama A."/>
            <person name="Takemoto M."/>
            <person name="Kawakami B."/>
            <person name="Yamazaki M."/>
            <person name="Watanabe K."/>
            <person name="Kumagai A."/>
            <person name="Itakura S."/>
            <person name="Fukuzumi Y."/>
            <person name="Fujimori Y."/>
            <person name="Komiyama M."/>
            <person name="Tashiro H."/>
            <person name="Tanigami A."/>
            <person name="Fujiwara T."/>
            <person name="Ono T."/>
            <person name="Yamada K."/>
            <person name="Fujii Y."/>
            <person name="Ozaki K."/>
            <person name="Hirao M."/>
            <person name="Ohmori Y."/>
            <person name="Kawabata A."/>
            <person name="Hikiji T."/>
            <person name="Kobatake N."/>
            <person name="Inagaki H."/>
            <person name="Ikema Y."/>
            <person name="Okamoto S."/>
            <person name="Okitani R."/>
            <person name="Kawakami T."/>
            <person name="Noguchi S."/>
            <person name="Itoh T."/>
            <person name="Shigeta K."/>
            <person name="Senba T."/>
            <person name="Matsumura K."/>
            <person name="Nakajima Y."/>
            <person name="Mizuno T."/>
            <person name="Morinaga M."/>
            <person name="Sasaki M."/>
            <person name="Togashi T."/>
            <person name="Oyama M."/>
            <person name="Hata H."/>
            <person name="Watanabe M."/>
            <person name="Komatsu T."/>
            <person name="Mizushima-Sugano J."/>
            <person name="Satoh T."/>
            <person name="Shirai Y."/>
            <person name="Takahashi Y."/>
            <person name="Nakagawa K."/>
            <person name="Okumura K."/>
            <person name="Nagase T."/>
            <person name="Nomura N."/>
            <person name="Kikuchi H."/>
            <person name="Masuho Y."/>
            <person name="Yamashita R."/>
            <person name="Nakai K."/>
            <person name="Yada T."/>
            <person name="Nakamura Y."/>
            <person name="Ohara O."/>
            <person name="Isogai T."/>
            <person name="Sugano S."/>
        </authorList>
    </citation>
    <scope>NUCLEOTIDE SEQUENCE [LARGE SCALE MRNA] (ISOFORMS 1 AND 2)</scope>
    <source>
        <tissue>Brain</tissue>
    </source>
</reference>
<reference key="3">
    <citation type="journal article" date="2006" name="Nature">
        <title>DNA sequence and analysis of human chromosome 8.</title>
        <authorList>
            <person name="Nusbaum C."/>
            <person name="Mikkelsen T.S."/>
            <person name="Zody M.C."/>
            <person name="Asakawa S."/>
            <person name="Taudien S."/>
            <person name="Garber M."/>
            <person name="Kodira C.D."/>
            <person name="Schueler M.G."/>
            <person name="Shimizu A."/>
            <person name="Whittaker C.A."/>
            <person name="Chang J.L."/>
            <person name="Cuomo C.A."/>
            <person name="Dewar K."/>
            <person name="FitzGerald M.G."/>
            <person name="Yang X."/>
            <person name="Allen N.R."/>
            <person name="Anderson S."/>
            <person name="Asakawa T."/>
            <person name="Blechschmidt K."/>
            <person name="Bloom T."/>
            <person name="Borowsky M.L."/>
            <person name="Butler J."/>
            <person name="Cook A."/>
            <person name="Corum B."/>
            <person name="DeArellano K."/>
            <person name="DeCaprio D."/>
            <person name="Dooley K.T."/>
            <person name="Dorris L. III"/>
            <person name="Engels R."/>
            <person name="Gloeckner G."/>
            <person name="Hafez N."/>
            <person name="Hagopian D.S."/>
            <person name="Hall J.L."/>
            <person name="Ishikawa S.K."/>
            <person name="Jaffe D.B."/>
            <person name="Kamat A."/>
            <person name="Kudoh J."/>
            <person name="Lehmann R."/>
            <person name="Lokitsang T."/>
            <person name="Macdonald P."/>
            <person name="Major J.E."/>
            <person name="Matthews C.D."/>
            <person name="Mauceli E."/>
            <person name="Menzel U."/>
            <person name="Mihalev A.H."/>
            <person name="Minoshima S."/>
            <person name="Murayama Y."/>
            <person name="Naylor J.W."/>
            <person name="Nicol R."/>
            <person name="Nguyen C."/>
            <person name="O'Leary S.B."/>
            <person name="O'Neill K."/>
            <person name="Parker S.C.J."/>
            <person name="Polley A."/>
            <person name="Raymond C.K."/>
            <person name="Reichwald K."/>
            <person name="Rodriguez J."/>
            <person name="Sasaki T."/>
            <person name="Schilhabel M."/>
            <person name="Siddiqui R."/>
            <person name="Smith C.L."/>
            <person name="Sneddon T.P."/>
            <person name="Talamas J.A."/>
            <person name="Tenzin P."/>
            <person name="Topham K."/>
            <person name="Venkataraman V."/>
            <person name="Wen G."/>
            <person name="Yamazaki S."/>
            <person name="Young S.K."/>
            <person name="Zeng Q."/>
            <person name="Zimmer A.R."/>
            <person name="Rosenthal A."/>
            <person name="Birren B.W."/>
            <person name="Platzer M."/>
            <person name="Shimizu N."/>
            <person name="Lander E.S."/>
        </authorList>
    </citation>
    <scope>NUCLEOTIDE SEQUENCE [LARGE SCALE GENOMIC DNA]</scope>
</reference>
<reference evidence="11" key="4">
    <citation type="submission" date="2005-07" db="EMBL/GenBank/DDBJ databases">
        <authorList>
            <person name="Mural R.J."/>
            <person name="Istrail S."/>
            <person name="Sutton G.G."/>
            <person name="Florea L."/>
            <person name="Halpern A.L."/>
            <person name="Mobarry C.M."/>
            <person name="Lippert R."/>
            <person name="Walenz B."/>
            <person name="Shatkay H."/>
            <person name="Dew I."/>
            <person name="Miller J.R."/>
            <person name="Flanigan M.J."/>
            <person name="Edwards N.J."/>
            <person name="Bolanos R."/>
            <person name="Fasulo D."/>
            <person name="Halldorsson B.V."/>
            <person name="Hannenhalli S."/>
            <person name="Turner R."/>
            <person name="Yooseph S."/>
            <person name="Lu F."/>
            <person name="Nusskern D.R."/>
            <person name="Shue B.C."/>
            <person name="Zheng X.H."/>
            <person name="Zhong F."/>
            <person name="Delcher A.L."/>
            <person name="Huson D.H."/>
            <person name="Kravitz S.A."/>
            <person name="Mouchard L."/>
            <person name="Reinert K."/>
            <person name="Remington K.A."/>
            <person name="Clark A.G."/>
            <person name="Waterman M.S."/>
            <person name="Eichler E.E."/>
            <person name="Adams M.D."/>
            <person name="Hunkapiller M.W."/>
            <person name="Myers E.W."/>
            <person name="Venter J.C."/>
        </authorList>
    </citation>
    <scope>NUCLEOTIDE SEQUENCE [LARGE SCALE GENOMIC DNA]</scope>
</reference>
<reference key="5">
    <citation type="journal article" date="2004" name="Genome Res.">
        <title>The status, quality, and expansion of the NIH full-length cDNA project: the Mammalian Gene Collection (MGC).</title>
        <authorList>
            <consortium name="The MGC Project Team"/>
        </authorList>
    </citation>
    <scope>NUCLEOTIDE SEQUENCE [LARGE SCALE MRNA] (ISOFORM 1)</scope>
    <source>
        <tissue>Retinal pigment epithelium</tissue>
    </source>
</reference>
<reference key="6">
    <citation type="journal article" date="2003" name="Biochemistry">
        <title>ST7 is a novel low-density lipoprotein receptor-related protein (LRP) with a cytoplasmic tail that interacts with proteins related to signal transduction pathways.</title>
        <authorList>
            <person name="Battle M.A."/>
            <person name="Maher V.M."/>
            <person name="McCormick J.J."/>
        </authorList>
    </citation>
    <scope>FUNCTION</scope>
    <scope>SUBCELLULAR LOCATION</scope>
    <scope>POSSIBLE INTERACTION WITH RACK1; ZFYVE9 AND NMRK2</scope>
</reference>
<reference key="7">
    <citation type="journal article" date="2019" name="Nat. Genet.">
        <title>Noncoding CGG repeat expansions in neuronal intranuclear inclusion disease, oculopharyngodistal myopathy and an overlapping disease.</title>
        <authorList>
            <person name="Ishiura H."/>
            <person name="Shibata S."/>
            <person name="Yoshimura J."/>
            <person name="Suzuki Y."/>
            <person name="Qu W."/>
            <person name="Doi K."/>
            <person name="Almansour M.A."/>
            <person name="Kikuchi J.K."/>
            <person name="Taira M."/>
            <person name="Mitsui J."/>
            <person name="Takahashi Y."/>
            <person name="Ichikawa Y."/>
            <person name="Mano T."/>
            <person name="Iwata A."/>
            <person name="Harigaya Y."/>
            <person name="Matsukawa M.K."/>
            <person name="Matsukawa T."/>
            <person name="Tanaka M."/>
            <person name="Shirota Y."/>
            <person name="Ohtomo R."/>
            <person name="Kowa H."/>
            <person name="Date H."/>
            <person name="Mitsue A."/>
            <person name="Hatsuta H."/>
            <person name="Morimoto S."/>
            <person name="Murayama S."/>
            <person name="Shiio Y."/>
            <person name="Saito Y."/>
            <person name="Mitsutake A."/>
            <person name="Kawai M."/>
            <person name="Sasaki T."/>
            <person name="Sugiyama Y."/>
            <person name="Hamada M."/>
            <person name="Ohtomo G."/>
            <person name="Terao Y."/>
            <person name="Nakazato Y."/>
            <person name="Takeda A."/>
            <person name="Sakiyama Y."/>
            <person name="Umeda-Kameyama Y."/>
            <person name="Shinmi J."/>
            <person name="Ogata K."/>
            <person name="Kohno Y."/>
            <person name="Lim S.Y."/>
            <person name="Tan A.H."/>
            <person name="Shimizu J."/>
            <person name="Goto J."/>
            <person name="Nishino I."/>
            <person name="Toda T."/>
            <person name="Morishita S."/>
            <person name="Tsuji S."/>
        </authorList>
    </citation>
    <scope>INVOLVEMENT IN OPDM1</scope>
</reference>
<reference key="8">
    <citation type="journal article" date="2023" name="Am. J. Hum. Genet.">
        <title>CGG repeat expansion in LRP12 in amyotrophic lateral sclerosis.</title>
        <authorList>
            <person name="Kume K."/>
            <person name="Kurashige T."/>
            <person name="Muguruma K."/>
            <person name="Morino H."/>
            <person name="Tada Y."/>
            <person name="Kikumoto M."/>
            <person name="Miyamoto T."/>
            <person name="Akutsu S.N."/>
            <person name="Matsuda Y."/>
            <person name="Matsuura S."/>
            <person name="Nakamori M."/>
            <person name="Nishiyama A."/>
            <person name="Izumi R."/>
            <person name="Niihori T."/>
            <person name="Ogasawara M."/>
            <person name="Eura N."/>
            <person name="Kato T."/>
            <person name="Yokomura M."/>
            <person name="Nakayama Y."/>
            <person name="Ito H."/>
            <person name="Nakamura M."/>
            <person name="Saito K."/>
            <person name="Riku Y."/>
            <person name="Iwasaki Y."/>
            <person name="Maruyama H."/>
            <person name="Aoki Y."/>
            <person name="Nishino I."/>
            <person name="Izumi Y."/>
            <person name="Aoki M."/>
            <person name="Kawakami H."/>
        </authorList>
    </citation>
    <scope>INVOLVEMENT IN ALS28</scope>
    <scope>INVOLVEMENT IN OPDM1</scope>
</reference>
<evidence type="ECO:0000250" key="1"/>
<evidence type="ECO:0000255" key="2"/>
<evidence type="ECO:0000255" key="3">
    <source>
        <dbReference type="PROSITE-ProRule" id="PRU00059"/>
    </source>
</evidence>
<evidence type="ECO:0000255" key="4">
    <source>
        <dbReference type="PROSITE-ProRule" id="PRU00124"/>
    </source>
</evidence>
<evidence type="ECO:0000256" key="5">
    <source>
        <dbReference type="SAM" id="MobiDB-lite"/>
    </source>
</evidence>
<evidence type="ECO:0000269" key="6">
    <source>
    </source>
</evidence>
<evidence type="ECO:0000269" key="7">
    <source>
    </source>
</evidence>
<evidence type="ECO:0000269" key="8">
    <source>
    </source>
</evidence>
<evidence type="ECO:0000269" key="9">
    <source>
    </source>
</evidence>
<evidence type="ECO:0000303" key="10">
    <source>
    </source>
</evidence>
<evidence type="ECO:0000305" key="11"/>
<evidence type="ECO:0000312" key="12">
    <source>
        <dbReference type="EMBL" id="AAD44360.1"/>
    </source>
</evidence>
<gene>
    <name type="primary">LRP12</name>
    <name type="synonym">ST7</name>
</gene>
<protein>
    <recommendedName>
        <fullName>Low-density lipoprotein receptor-related protein 12</fullName>
        <shortName>LDLR-related protein 12</shortName>
        <shortName>LRP-12</shortName>
    </recommendedName>
    <alternativeName>
        <fullName>Suppressor of tumorigenicity 7 protein</fullName>
    </alternativeName>
</protein>
<accession>Q9Y561</accession>
<accession>A8K137</accession>
<accession>B4DRQ2</accession>
<dbReference type="EMBL" id="AF166350">
    <property type="protein sequence ID" value="AAD44360.1"/>
    <property type="molecule type" value="mRNA"/>
</dbReference>
<dbReference type="EMBL" id="AK289752">
    <property type="protein sequence ID" value="BAF82441.1"/>
    <property type="molecule type" value="mRNA"/>
</dbReference>
<dbReference type="EMBL" id="AK299374">
    <property type="protein sequence ID" value="BAG61364.1"/>
    <property type="molecule type" value="mRNA"/>
</dbReference>
<dbReference type="EMBL" id="AC087370">
    <property type="status" value="NOT_ANNOTATED_CDS"/>
    <property type="molecule type" value="Genomic_DNA"/>
</dbReference>
<dbReference type="EMBL" id="AC090827">
    <property type="status" value="NOT_ANNOTATED_CDS"/>
    <property type="molecule type" value="Genomic_DNA"/>
</dbReference>
<dbReference type="EMBL" id="AP002847">
    <property type="status" value="NOT_ANNOTATED_CDS"/>
    <property type="molecule type" value="Genomic_DNA"/>
</dbReference>
<dbReference type="EMBL" id="CH471060">
    <property type="protein sequence ID" value="EAW91897.1"/>
    <property type="molecule type" value="Genomic_DNA"/>
</dbReference>
<dbReference type="EMBL" id="BC032109">
    <property type="protein sequence ID" value="AAH32109.1"/>
    <property type="molecule type" value="mRNA"/>
</dbReference>
<dbReference type="CCDS" id="CCDS47907.1">
    <molecule id="Q9Y561-2"/>
</dbReference>
<dbReference type="CCDS" id="CCDS6303.1">
    <molecule id="Q9Y561-1"/>
</dbReference>
<dbReference type="RefSeq" id="NP_001129175.1">
    <molecule id="Q9Y561-2"/>
    <property type="nucleotide sequence ID" value="NM_001135703.3"/>
</dbReference>
<dbReference type="RefSeq" id="NP_038465.1">
    <molecule id="Q9Y561-1"/>
    <property type="nucleotide sequence ID" value="NM_013437.5"/>
</dbReference>
<dbReference type="BioGRID" id="119000">
    <property type="interactions" value="56"/>
</dbReference>
<dbReference type="FunCoup" id="Q9Y561">
    <property type="interactions" value="1664"/>
</dbReference>
<dbReference type="IntAct" id="Q9Y561">
    <property type="interactions" value="58"/>
</dbReference>
<dbReference type="MINT" id="Q9Y561"/>
<dbReference type="STRING" id="9606.ENSP00000276654"/>
<dbReference type="GlyCosmos" id="Q9Y561">
    <property type="glycosylation" value="6 sites, No reported glycans"/>
</dbReference>
<dbReference type="GlyGen" id="Q9Y561">
    <property type="glycosylation" value="6 sites, 2 N-linked glycans (2 sites)"/>
</dbReference>
<dbReference type="iPTMnet" id="Q9Y561"/>
<dbReference type="PhosphoSitePlus" id="Q9Y561"/>
<dbReference type="SwissPalm" id="Q9Y561"/>
<dbReference type="BioMuta" id="LRP12"/>
<dbReference type="DMDM" id="25091287"/>
<dbReference type="jPOST" id="Q9Y561"/>
<dbReference type="MassIVE" id="Q9Y561"/>
<dbReference type="PaxDb" id="9606-ENSP00000276654"/>
<dbReference type="PeptideAtlas" id="Q9Y561"/>
<dbReference type="ProteomicsDB" id="86291">
    <molecule id="Q9Y561-1"/>
</dbReference>
<dbReference type="ProteomicsDB" id="86292">
    <molecule id="Q9Y561-2"/>
</dbReference>
<dbReference type="Antibodypedia" id="2508">
    <property type="antibodies" value="181 antibodies from 32 providers"/>
</dbReference>
<dbReference type="DNASU" id="29967"/>
<dbReference type="Ensembl" id="ENST00000276654.10">
    <molecule id="Q9Y561-1"/>
    <property type="protein sequence ID" value="ENSP00000276654.5"/>
    <property type="gene ID" value="ENSG00000147650.12"/>
</dbReference>
<dbReference type="Ensembl" id="ENST00000424843.6">
    <molecule id="Q9Y561-2"/>
    <property type="protein sequence ID" value="ENSP00000399148.2"/>
    <property type="gene ID" value="ENSG00000147650.12"/>
</dbReference>
<dbReference type="GeneID" id="29967"/>
<dbReference type="KEGG" id="hsa:29967"/>
<dbReference type="MANE-Select" id="ENST00000276654.10">
    <property type="protein sequence ID" value="ENSP00000276654.5"/>
    <property type="RefSeq nucleotide sequence ID" value="NM_013437.5"/>
    <property type="RefSeq protein sequence ID" value="NP_038465.1"/>
</dbReference>
<dbReference type="UCSC" id="uc003yma.4">
    <molecule id="Q9Y561-1"/>
    <property type="organism name" value="human"/>
</dbReference>
<dbReference type="AGR" id="HGNC:31708"/>
<dbReference type="CTD" id="29967"/>
<dbReference type="DisGeNET" id="29967"/>
<dbReference type="GeneCards" id="LRP12"/>
<dbReference type="HGNC" id="HGNC:31708">
    <property type="gene designation" value="LRP12"/>
</dbReference>
<dbReference type="HPA" id="ENSG00000147650">
    <property type="expression patterns" value="Low tissue specificity"/>
</dbReference>
<dbReference type="MalaCards" id="LRP12"/>
<dbReference type="MIM" id="164310">
    <property type="type" value="phenotype"/>
</dbReference>
<dbReference type="MIM" id="618299">
    <property type="type" value="gene"/>
</dbReference>
<dbReference type="MIM" id="620452">
    <property type="type" value="phenotype"/>
</dbReference>
<dbReference type="neXtProt" id="NX_Q9Y561"/>
<dbReference type="OpenTargets" id="ENSG00000147650"/>
<dbReference type="Orphanet" id="98897">
    <property type="disease" value="Oculopharyngodistal myopathy"/>
</dbReference>
<dbReference type="PharmGKB" id="PA134921850"/>
<dbReference type="VEuPathDB" id="HostDB:ENSG00000147650"/>
<dbReference type="eggNOG" id="KOG1215">
    <property type="taxonomic scope" value="Eukaryota"/>
</dbReference>
<dbReference type="GeneTree" id="ENSGT00940000158307"/>
<dbReference type="InParanoid" id="Q9Y561"/>
<dbReference type="OMA" id="SWYIQAN"/>
<dbReference type="OrthoDB" id="10020456at2759"/>
<dbReference type="PAN-GO" id="Q9Y561">
    <property type="GO annotations" value="2 GO annotations based on evolutionary models"/>
</dbReference>
<dbReference type="PhylomeDB" id="Q9Y561"/>
<dbReference type="TreeFam" id="TF332149"/>
<dbReference type="PathwayCommons" id="Q9Y561"/>
<dbReference type="Reactome" id="R-HSA-975634">
    <property type="pathway name" value="Retinoid metabolism and transport"/>
</dbReference>
<dbReference type="SignaLink" id="Q9Y561"/>
<dbReference type="BioGRID-ORCS" id="29967">
    <property type="hits" value="12 hits in 1164 CRISPR screens"/>
</dbReference>
<dbReference type="ChiTaRS" id="LRP12">
    <property type="organism name" value="human"/>
</dbReference>
<dbReference type="GenomeRNAi" id="29967"/>
<dbReference type="Pharos" id="Q9Y561">
    <property type="development level" value="Tbio"/>
</dbReference>
<dbReference type="PRO" id="PR:Q9Y561"/>
<dbReference type="Proteomes" id="UP000005640">
    <property type="component" value="Chromosome 8"/>
</dbReference>
<dbReference type="RNAct" id="Q9Y561">
    <property type="molecule type" value="protein"/>
</dbReference>
<dbReference type="Bgee" id="ENSG00000147650">
    <property type="expression patterns" value="Expressed in stromal cell of endometrium and 174 other cell types or tissues"/>
</dbReference>
<dbReference type="ExpressionAtlas" id="Q9Y561">
    <property type="expression patterns" value="baseline and differential"/>
</dbReference>
<dbReference type="GO" id="GO:0005905">
    <property type="term" value="C:clathrin-coated pit"/>
    <property type="evidence" value="ECO:0007669"/>
    <property type="project" value="UniProtKB-KW"/>
</dbReference>
<dbReference type="GO" id="GO:0016020">
    <property type="term" value="C:membrane"/>
    <property type="evidence" value="ECO:0000303"/>
    <property type="project" value="UniProtKB"/>
</dbReference>
<dbReference type="GO" id="GO:0005886">
    <property type="term" value="C:plasma membrane"/>
    <property type="evidence" value="ECO:0000314"/>
    <property type="project" value="UniProtKB"/>
</dbReference>
<dbReference type="GO" id="GO:0005178">
    <property type="term" value="F:integrin binding"/>
    <property type="evidence" value="ECO:0007669"/>
    <property type="project" value="Ensembl"/>
</dbReference>
<dbReference type="GO" id="GO:0005041">
    <property type="term" value="F:low-density lipoprotein particle receptor activity"/>
    <property type="evidence" value="ECO:0000303"/>
    <property type="project" value="UniProtKB"/>
</dbReference>
<dbReference type="GO" id="GO:0007155">
    <property type="term" value="P:cell adhesion"/>
    <property type="evidence" value="ECO:0007669"/>
    <property type="project" value="Ensembl"/>
</dbReference>
<dbReference type="GO" id="GO:0006897">
    <property type="term" value="P:endocytosis"/>
    <property type="evidence" value="ECO:0000303"/>
    <property type="project" value="UniProtKB"/>
</dbReference>
<dbReference type="GO" id="GO:0033622">
    <property type="term" value="P:integrin activation"/>
    <property type="evidence" value="ECO:0007669"/>
    <property type="project" value="Ensembl"/>
</dbReference>
<dbReference type="GO" id="GO:0097021">
    <property type="term" value="P:lymphocyte migration into lymphoid organs"/>
    <property type="evidence" value="ECO:0007669"/>
    <property type="project" value="Ensembl"/>
</dbReference>
<dbReference type="GO" id="GO:0001764">
    <property type="term" value="P:neuron migration"/>
    <property type="evidence" value="ECO:0000314"/>
    <property type="project" value="MGI"/>
</dbReference>
<dbReference type="GO" id="GO:0031175">
    <property type="term" value="P:neuron projection development"/>
    <property type="evidence" value="ECO:0000314"/>
    <property type="project" value="MGI"/>
</dbReference>
<dbReference type="GO" id="GO:0040008">
    <property type="term" value="P:regulation of growth"/>
    <property type="evidence" value="ECO:0000303"/>
    <property type="project" value="UniProtKB"/>
</dbReference>
<dbReference type="GO" id="GO:0007165">
    <property type="term" value="P:signal transduction"/>
    <property type="evidence" value="ECO:0000303"/>
    <property type="project" value="UniProtKB"/>
</dbReference>
<dbReference type="CDD" id="cd00041">
    <property type="entry name" value="CUB"/>
    <property type="match status" value="2"/>
</dbReference>
<dbReference type="CDD" id="cd00112">
    <property type="entry name" value="LDLa"/>
    <property type="match status" value="4"/>
</dbReference>
<dbReference type="FunFam" id="2.60.120.290:FF:000021">
    <property type="entry name" value="Low-density lipoprotein receptor-related protein 12"/>
    <property type="match status" value="1"/>
</dbReference>
<dbReference type="FunFam" id="2.60.120.290:FF:000024">
    <property type="entry name" value="Low-density lipoprotein receptor-related protein 12"/>
    <property type="match status" value="1"/>
</dbReference>
<dbReference type="FunFam" id="4.10.400.10:FF:000063">
    <property type="entry name" value="low-density lipoprotein receptor-related protein 12"/>
    <property type="match status" value="1"/>
</dbReference>
<dbReference type="FunFam" id="4.10.400.10:FF:000040">
    <property type="entry name" value="low-density lipoprotein receptor-related protein 3"/>
    <property type="match status" value="1"/>
</dbReference>
<dbReference type="FunFam" id="4.10.400.10:FF:000003">
    <property type="entry name" value="Putative low-density lipoprotein receptor-related protein 12"/>
    <property type="match status" value="3"/>
</dbReference>
<dbReference type="Gene3D" id="4.10.400.10">
    <property type="entry name" value="Low-density Lipoprotein Receptor"/>
    <property type="match status" value="5"/>
</dbReference>
<dbReference type="Gene3D" id="2.60.120.290">
    <property type="entry name" value="Spermadhesin, CUB domain"/>
    <property type="match status" value="2"/>
</dbReference>
<dbReference type="InterPro" id="IPR000859">
    <property type="entry name" value="CUB_dom"/>
</dbReference>
<dbReference type="InterPro" id="IPR036055">
    <property type="entry name" value="LDL_receptor-like_sf"/>
</dbReference>
<dbReference type="InterPro" id="IPR023415">
    <property type="entry name" value="LDLR_class-A_CS"/>
</dbReference>
<dbReference type="InterPro" id="IPR002172">
    <property type="entry name" value="LDrepeatLR_classA_rpt"/>
</dbReference>
<dbReference type="InterPro" id="IPR035914">
    <property type="entry name" value="Sperma_CUB_dom_sf"/>
</dbReference>
<dbReference type="PANTHER" id="PTHR24251:SF30">
    <property type="entry name" value="MEMBRANE FRIZZLED-RELATED PROTEIN"/>
    <property type="match status" value="1"/>
</dbReference>
<dbReference type="PANTHER" id="PTHR24251">
    <property type="entry name" value="OVOCHYMASE-RELATED"/>
    <property type="match status" value="1"/>
</dbReference>
<dbReference type="Pfam" id="PF00431">
    <property type="entry name" value="CUB"/>
    <property type="match status" value="2"/>
</dbReference>
<dbReference type="Pfam" id="PF00057">
    <property type="entry name" value="Ldl_recept_a"/>
    <property type="match status" value="4"/>
</dbReference>
<dbReference type="PRINTS" id="PR00261">
    <property type="entry name" value="LDLRECEPTOR"/>
</dbReference>
<dbReference type="SMART" id="SM00042">
    <property type="entry name" value="CUB"/>
    <property type="match status" value="2"/>
</dbReference>
<dbReference type="SMART" id="SM00192">
    <property type="entry name" value="LDLa"/>
    <property type="match status" value="5"/>
</dbReference>
<dbReference type="SUPFAM" id="SSF57424">
    <property type="entry name" value="LDL receptor-like module"/>
    <property type="match status" value="5"/>
</dbReference>
<dbReference type="SUPFAM" id="SSF49854">
    <property type="entry name" value="Spermadhesin, CUB domain"/>
    <property type="match status" value="2"/>
</dbReference>
<dbReference type="PROSITE" id="PS01180">
    <property type="entry name" value="CUB"/>
    <property type="match status" value="2"/>
</dbReference>
<dbReference type="PROSITE" id="PS01209">
    <property type="entry name" value="LDLRA_1"/>
    <property type="match status" value="2"/>
</dbReference>
<dbReference type="PROSITE" id="PS50068">
    <property type="entry name" value="LDLRA_2"/>
    <property type="match status" value="5"/>
</dbReference>
<name>LRP12_HUMAN</name>